<organism>
    <name type="scientific">Bradyrhizobium diazoefficiens (strain JCM 10833 / BCRC 13528 / IAM 13628 / NBRC 14792 / USDA 110)</name>
    <dbReference type="NCBI Taxonomy" id="224911"/>
    <lineage>
        <taxon>Bacteria</taxon>
        <taxon>Pseudomonadati</taxon>
        <taxon>Pseudomonadota</taxon>
        <taxon>Alphaproteobacteria</taxon>
        <taxon>Hyphomicrobiales</taxon>
        <taxon>Nitrobacteraceae</taxon>
        <taxon>Bradyrhizobium</taxon>
    </lineage>
</organism>
<feature type="chain" id="PRO_0000220327" description="UPF0262 protein blr1257">
    <location>
        <begin position="1"/>
        <end position="165"/>
    </location>
</feature>
<evidence type="ECO:0000255" key="1">
    <source>
        <dbReference type="HAMAP-Rule" id="MF_00678"/>
    </source>
</evidence>
<gene>
    <name type="ordered locus">blr1257</name>
</gene>
<keyword id="KW-1185">Reference proteome</keyword>
<comment type="similarity">
    <text evidence="1">Belongs to the UPF0262 family.</text>
</comment>
<dbReference type="EMBL" id="BA000040">
    <property type="protein sequence ID" value="BAC46522.1"/>
    <property type="molecule type" value="Genomic_DNA"/>
</dbReference>
<dbReference type="RefSeq" id="NP_767897.1">
    <property type="nucleotide sequence ID" value="NC_004463.1"/>
</dbReference>
<dbReference type="RefSeq" id="WP_011084075.1">
    <property type="nucleotide sequence ID" value="NC_004463.1"/>
</dbReference>
<dbReference type="STRING" id="224911.AAV28_03180"/>
<dbReference type="EnsemblBacteria" id="BAC46522">
    <property type="protein sequence ID" value="BAC46522"/>
    <property type="gene ID" value="BAC46522"/>
</dbReference>
<dbReference type="GeneID" id="46488530"/>
<dbReference type="KEGG" id="bja:blr1257"/>
<dbReference type="PATRIC" id="fig|224911.44.peg.666"/>
<dbReference type="eggNOG" id="COG5328">
    <property type="taxonomic scope" value="Bacteria"/>
</dbReference>
<dbReference type="HOGENOM" id="CLU_112904_0_0_5"/>
<dbReference type="InParanoid" id="Q89V02"/>
<dbReference type="OrthoDB" id="9798434at2"/>
<dbReference type="PhylomeDB" id="Q89V02"/>
<dbReference type="Proteomes" id="UP000002526">
    <property type="component" value="Chromosome"/>
</dbReference>
<dbReference type="HAMAP" id="MF_00678">
    <property type="entry name" value="UPF0262"/>
    <property type="match status" value="1"/>
</dbReference>
<dbReference type="InterPro" id="IPR008321">
    <property type="entry name" value="UCP032146"/>
</dbReference>
<dbReference type="NCBIfam" id="NF002769">
    <property type="entry name" value="PRK02853.1"/>
    <property type="match status" value="1"/>
</dbReference>
<dbReference type="Pfam" id="PF06793">
    <property type="entry name" value="UPF0262"/>
    <property type="match status" value="1"/>
</dbReference>
<dbReference type="PIRSF" id="PIRSF032146">
    <property type="entry name" value="UCP032146"/>
    <property type="match status" value="1"/>
</dbReference>
<reference key="1">
    <citation type="journal article" date="2002" name="DNA Res.">
        <title>Complete genomic sequence of nitrogen-fixing symbiotic bacterium Bradyrhizobium japonicum USDA110.</title>
        <authorList>
            <person name="Kaneko T."/>
            <person name="Nakamura Y."/>
            <person name="Sato S."/>
            <person name="Minamisawa K."/>
            <person name="Uchiumi T."/>
            <person name="Sasamoto S."/>
            <person name="Watanabe A."/>
            <person name="Idesawa K."/>
            <person name="Iriguchi M."/>
            <person name="Kawashima K."/>
            <person name="Kohara M."/>
            <person name="Matsumoto M."/>
            <person name="Shimpo S."/>
            <person name="Tsuruoka H."/>
            <person name="Wada T."/>
            <person name="Yamada M."/>
            <person name="Tabata S."/>
        </authorList>
    </citation>
    <scope>NUCLEOTIDE SEQUENCE [LARGE SCALE GENOMIC DNA]</scope>
    <source>
        <strain>JCM 10833 / BCRC 13528 / IAM 13628 / NBRC 14792 / USDA 110</strain>
    </source>
</reference>
<accession>Q89V02</accession>
<proteinExistence type="inferred from homology"/>
<name>Y1257_BRADU</name>
<sequence length="165" mass="18637">MTKPPEQDDSNNRIVAVTLDEESIGRSGPDIEHERAIAIYDLIEQNLFAPEGADGKGPFTLHIGITGNRLMFDIRREDGAPVVVHLLSLGPFRGIVKDYFMICDSYYQAIRTATPDKIEAIDMGRRGIHDEGSRTLQERLKGKVRVDFETSRRLFTLITVLHWKG</sequence>
<protein>
    <recommendedName>
        <fullName evidence="1">UPF0262 protein blr1257</fullName>
    </recommendedName>
</protein>